<protein>
    <recommendedName>
        <fullName evidence="1">Glucose-6-phosphate isomerase</fullName>
        <shortName evidence="1">GPI</shortName>
        <ecNumber evidence="1">5.3.1.9</ecNumber>
    </recommendedName>
    <alternativeName>
        <fullName evidence="1">Phosphoglucose isomerase</fullName>
        <shortName evidence="1">PGI</shortName>
    </alternativeName>
    <alternativeName>
        <fullName evidence="1">Phosphohexose isomerase</fullName>
        <shortName evidence="1">PHI</shortName>
    </alternativeName>
</protein>
<evidence type="ECO:0000255" key="1">
    <source>
        <dbReference type="HAMAP-Rule" id="MF_00473"/>
    </source>
</evidence>
<reference key="1">
    <citation type="submission" date="2008-10" db="EMBL/GenBank/DDBJ databases">
        <title>Genome sequence of Bacillus cereus AH187.</title>
        <authorList>
            <person name="Dodson R.J."/>
            <person name="Durkin A.S."/>
            <person name="Rosovitz M.J."/>
            <person name="Rasko D.A."/>
            <person name="Kolsto A.B."/>
            <person name="Okstad O.A."/>
            <person name="Ravel J."/>
            <person name="Sutton G."/>
        </authorList>
    </citation>
    <scope>NUCLEOTIDE SEQUENCE [LARGE SCALE GENOMIC DNA]</scope>
    <source>
        <strain>AH187</strain>
    </source>
</reference>
<gene>
    <name evidence="1" type="primary">pgi</name>
    <name type="ordered locus">BCAH187_A5042</name>
</gene>
<dbReference type="EC" id="5.3.1.9" evidence="1"/>
<dbReference type="EMBL" id="CP001177">
    <property type="protein sequence ID" value="ACJ80390.1"/>
    <property type="molecule type" value="Genomic_DNA"/>
</dbReference>
<dbReference type="SMR" id="B7HTY6"/>
<dbReference type="KEGG" id="bcr:BCAH187_A5042"/>
<dbReference type="HOGENOM" id="CLU_037303_0_1_9"/>
<dbReference type="UniPathway" id="UPA00109">
    <property type="reaction ID" value="UER00181"/>
</dbReference>
<dbReference type="UniPathway" id="UPA00138"/>
<dbReference type="Proteomes" id="UP000002214">
    <property type="component" value="Chromosome"/>
</dbReference>
<dbReference type="GO" id="GO:0005829">
    <property type="term" value="C:cytosol"/>
    <property type="evidence" value="ECO:0007669"/>
    <property type="project" value="TreeGrafter"/>
</dbReference>
<dbReference type="GO" id="GO:0097367">
    <property type="term" value="F:carbohydrate derivative binding"/>
    <property type="evidence" value="ECO:0007669"/>
    <property type="project" value="InterPro"/>
</dbReference>
<dbReference type="GO" id="GO:0004347">
    <property type="term" value="F:glucose-6-phosphate isomerase activity"/>
    <property type="evidence" value="ECO:0007669"/>
    <property type="project" value="UniProtKB-UniRule"/>
</dbReference>
<dbReference type="GO" id="GO:0048029">
    <property type="term" value="F:monosaccharide binding"/>
    <property type="evidence" value="ECO:0007669"/>
    <property type="project" value="TreeGrafter"/>
</dbReference>
<dbReference type="GO" id="GO:0006094">
    <property type="term" value="P:gluconeogenesis"/>
    <property type="evidence" value="ECO:0007669"/>
    <property type="project" value="UniProtKB-UniRule"/>
</dbReference>
<dbReference type="GO" id="GO:0051156">
    <property type="term" value="P:glucose 6-phosphate metabolic process"/>
    <property type="evidence" value="ECO:0007669"/>
    <property type="project" value="TreeGrafter"/>
</dbReference>
<dbReference type="GO" id="GO:0006096">
    <property type="term" value="P:glycolytic process"/>
    <property type="evidence" value="ECO:0007669"/>
    <property type="project" value="UniProtKB-UniRule"/>
</dbReference>
<dbReference type="CDD" id="cd05015">
    <property type="entry name" value="SIS_PGI_1"/>
    <property type="match status" value="1"/>
</dbReference>
<dbReference type="CDD" id="cd05016">
    <property type="entry name" value="SIS_PGI_2"/>
    <property type="match status" value="1"/>
</dbReference>
<dbReference type="FunFam" id="3.40.50.10490:FF:000015">
    <property type="entry name" value="Glucose-6-phosphate isomerase"/>
    <property type="match status" value="1"/>
</dbReference>
<dbReference type="FunFam" id="3.40.50.10490:FF:000016">
    <property type="entry name" value="Glucose-6-phosphate isomerase"/>
    <property type="match status" value="1"/>
</dbReference>
<dbReference type="FunFam" id="3.40.50.10490:FF:000020">
    <property type="entry name" value="Glucose-6-phosphate isomerase"/>
    <property type="match status" value="1"/>
</dbReference>
<dbReference type="Gene3D" id="3.40.50.10490">
    <property type="entry name" value="Glucose-6-phosphate isomerase like protein, domain 1"/>
    <property type="match status" value="3"/>
</dbReference>
<dbReference type="HAMAP" id="MF_00473">
    <property type="entry name" value="G6P_isomerase"/>
    <property type="match status" value="1"/>
</dbReference>
<dbReference type="InterPro" id="IPR001672">
    <property type="entry name" value="G6P_Isomerase"/>
</dbReference>
<dbReference type="InterPro" id="IPR018189">
    <property type="entry name" value="Phosphoglucose_isomerase_CS"/>
</dbReference>
<dbReference type="InterPro" id="IPR046348">
    <property type="entry name" value="SIS_dom_sf"/>
</dbReference>
<dbReference type="InterPro" id="IPR035476">
    <property type="entry name" value="SIS_PGI_1"/>
</dbReference>
<dbReference type="InterPro" id="IPR035482">
    <property type="entry name" value="SIS_PGI_2"/>
</dbReference>
<dbReference type="NCBIfam" id="NF010697">
    <property type="entry name" value="PRK14097.1"/>
    <property type="match status" value="1"/>
</dbReference>
<dbReference type="PANTHER" id="PTHR11469">
    <property type="entry name" value="GLUCOSE-6-PHOSPHATE ISOMERASE"/>
    <property type="match status" value="1"/>
</dbReference>
<dbReference type="PANTHER" id="PTHR11469:SF1">
    <property type="entry name" value="GLUCOSE-6-PHOSPHATE ISOMERASE"/>
    <property type="match status" value="1"/>
</dbReference>
<dbReference type="Pfam" id="PF00342">
    <property type="entry name" value="PGI"/>
    <property type="match status" value="1"/>
</dbReference>
<dbReference type="PRINTS" id="PR00662">
    <property type="entry name" value="G6PISOMERASE"/>
</dbReference>
<dbReference type="SUPFAM" id="SSF53697">
    <property type="entry name" value="SIS domain"/>
    <property type="match status" value="1"/>
</dbReference>
<dbReference type="PROSITE" id="PS00765">
    <property type="entry name" value="P_GLUCOSE_ISOMERASE_1"/>
    <property type="match status" value="1"/>
</dbReference>
<dbReference type="PROSITE" id="PS00174">
    <property type="entry name" value="P_GLUCOSE_ISOMERASE_2"/>
    <property type="match status" value="1"/>
</dbReference>
<dbReference type="PROSITE" id="PS51463">
    <property type="entry name" value="P_GLUCOSE_ISOMERASE_3"/>
    <property type="match status" value="1"/>
</dbReference>
<proteinExistence type="inferred from homology"/>
<accession>B7HTY6</accession>
<keyword id="KW-0963">Cytoplasm</keyword>
<keyword id="KW-0312">Gluconeogenesis</keyword>
<keyword id="KW-0324">Glycolysis</keyword>
<keyword id="KW-0413">Isomerase</keyword>
<keyword id="KW-0597">Phosphoprotein</keyword>
<feature type="chain" id="PRO_1000125694" description="Glucose-6-phosphate isomerase">
    <location>
        <begin position="1"/>
        <end position="450"/>
    </location>
</feature>
<feature type="active site" description="Proton donor" evidence="1">
    <location>
        <position position="291"/>
    </location>
</feature>
<feature type="active site" evidence="1">
    <location>
        <position position="312"/>
    </location>
</feature>
<feature type="active site" evidence="1">
    <location>
        <position position="426"/>
    </location>
</feature>
<feature type="modified residue" description="Phosphothreonine" evidence="1">
    <location>
        <position position="39"/>
    </location>
</feature>
<name>G6PI_BACC7</name>
<comment type="function">
    <text evidence="1">Catalyzes the reversible isomerization of glucose-6-phosphate to fructose-6-phosphate.</text>
</comment>
<comment type="catalytic activity">
    <reaction evidence="1">
        <text>alpha-D-glucose 6-phosphate = beta-D-fructose 6-phosphate</text>
        <dbReference type="Rhea" id="RHEA:11816"/>
        <dbReference type="ChEBI" id="CHEBI:57634"/>
        <dbReference type="ChEBI" id="CHEBI:58225"/>
        <dbReference type="EC" id="5.3.1.9"/>
    </reaction>
</comment>
<comment type="pathway">
    <text evidence="1">Carbohydrate biosynthesis; gluconeogenesis.</text>
</comment>
<comment type="pathway">
    <text evidence="1">Carbohydrate degradation; glycolysis; D-glyceraldehyde 3-phosphate and glycerone phosphate from D-glucose: step 2/4.</text>
</comment>
<comment type="subcellular location">
    <subcellularLocation>
        <location evidence="1">Cytoplasm</location>
    </subcellularLocation>
</comment>
<comment type="similarity">
    <text evidence="1">Belongs to the GPI family.</text>
</comment>
<sequence length="450" mass="50355">MSTHVTFDYSKALSFIGEHEITYLRDAVKVTHHAIHEKTGAGNDFLGWVDLPLQYDKEEFARIQKCAEKIKNDSDILLVVGIGGSYLGARAAIEMLNHSFYNTLSKEQRKTPQVLFVGQNISSTYMKDLMDVLEGKDFSINVISKSGTTTEPALAFRIFRKLLEEKYGKEEARKRIYATTDKARGALKTLADNEGYETFVIPDDVGGRFSVLTPVGLLPIAVSGLNIEEMMKGAAAGREDFGTSELEENPAYQYAVVRNALYNKGKTIEMLVNYEPALQYFAEWWKQLFGESEGKDQKGIFPSSANFSTDLHSLGQYVQEGRRDLFETVLKVGKPTHELTIESEENDLDGLNYLAGETVDFVNTKAYEGTLLAHSDGGVPNLIVNIPELNEYTFGYLVYFFEKACAMSGYLLGVNPFDQPGVEAYKKNMFALLGKPGFEELKAELEERLK</sequence>
<organism>
    <name type="scientific">Bacillus cereus (strain AH187)</name>
    <dbReference type="NCBI Taxonomy" id="405534"/>
    <lineage>
        <taxon>Bacteria</taxon>
        <taxon>Bacillati</taxon>
        <taxon>Bacillota</taxon>
        <taxon>Bacilli</taxon>
        <taxon>Bacillales</taxon>
        <taxon>Bacillaceae</taxon>
        <taxon>Bacillus</taxon>
        <taxon>Bacillus cereus group</taxon>
    </lineage>
</organism>